<gene>
    <name type="primary">Depdc1b</name>
</gene>
<accession>Q8BH88</accession>
<accession>Q810T1</accession>
<accession>Q8BZ67</accession>
<feature type="chain" id="PRO_0000284792" description="DEP domain-containing protein 1B">
    <location>
        <begin position="1"/>
        <end position="529"/>
    </location>
</feature>
<feature type="domain" description="DEP" evidence="2">
    <location>
        <begin position="24"/>
        <end position="108"/>
    </location>
</feature>
<feature type="domain" description="Rho-GAP" evidence="3">
    <location>
        <begin position="201"/>
        <end position="393"/>
    </location>
</feature>
<feature type="site" description="Arginine finger; crucial for GTP hydrolysis by stabilizing the transition state" evidence="3">
    <location>
        <position position="231"/>
    </location>
</feature>
<feature type="modified residue" description="Phosphoserine" evidence="1">
    <location>
        <position position="160"/>
    </location>
</feature>
<feature type="modified residue" description="Phosphoserine" evidence="1">
    <location>
        <position position="436"/>
    </location>
</feature>
<feature type="sequence conflict" description="In Ref. 1; BAC29473." evidence="4" ref="1">
    <original>M</original>
    <variation>I</variation>
    <location>
        <position position="28"/>
    </location>
</feature>
<feature type="sequence conflict" description="In Ref. 2; AAH48246." evidence="4" ref="2">
    <original>A</original>
    <variation>V</variation>
    <location>
        <position position="398"/>
    </location>
</feature>
<proteinExistence type="evidence at transcript level"/>
<reference key="1">
    <citation type="journal article" date="2005" name="Science">
        <title>The transcriptional landscape of the mammalian genome.</title>
        <authorList>
            <person name="Carninci P."/>
            <person name="Kasukawa T."/>
            <person name="Katayama S."/>
            <person name="Gough J."/>
            <person name="Frith M.C."/>
            <person name="Maeda N."/>
            <person name="Oyama R."/>
            <person name="Ravasi T."/>
            <person name="Lenhard B."/>
            <person name="Wells C."/>
            <person name="Kodzius R."/>
            <person name="Shimokawa K."/>
            <person name="Bajic V.B."/>
            <person name="Brenner S.E."/>
            <person name="Batalov S."/>
            <person name="Forrest A.R."/>
            <person name="Zavolan M."/>
            <person name="Davis M.J."/>
            <person name="Wilming L.G."/>
            <person name="Aidinis V."/>
            <person name="Allen J.E."/>
            <person name="Ambesi-Impiombato A."/>
            <person name="Apweiler R."/>
            <person name="Aturaliya R.N."/>
            <person name="Bailey T.L."/>
            <person name="Bansal M."/>
            <person name="Baxter L."/>
            <person name="Beisel K.W."/>
            <person name="Bersano T."/>
            <person name="Bono H."/>
            <person name="Chalk A.M."/>
            <person name="Chiu K.P."/>
            <person name="Choudhary V."/>
            <person name="Christoffels A."/>
            <person name="Clutterbuck D.R."/>
            <person name="Crowe M.L."/>
            <person name="Dalla E."/>
            <person name="Dalrymple B.P."/>
            <person name="de Bono B."/>
            <person name="Della Gatta G."/>
            <person name="di Bernardo D."/>
            <person name="Down T."/>
            <person name="Engstrom P."/>
            <person name="Fagiolini M."/>
            <person name="Faulkner G."/>
            <person name="Fletcher C.F."/>
            <person name="Fukushima T."/>
            <person name="Furuno M."/>
            <person name="Futaki S."/>
            <person name="Gariboldi M."/>
            <person name="Georgii-Hemming P."/>
            <person name="Gingeras T.R."/>
            <person name="Gojobori T."/>
            <person name="Green R.E."/>
            <person name="Gustincich S."/>
            <person name="Harbers M."/>
            <person name="Hayashi Y."/>
            <person name="Hensch T.K."/>
            <person name="Hirokawa N."/>
            <person name="Hill D."/>
            <person name="Huminiecki L."/>
            <person name="Iacono M."/>
            <person name="Ikeo K."/>
            <person name="Iwama A."/>
            <person name="Ishikawa T."/>
            <person name="Jakt M."/>
            <person name="Kanapin A."/>
            <person name="Katoh M."/>
            <person name="Kawasawa Y."/>
            <person name="Kelso J."/>
            <person name="Kitamura H."/>
            <person name="Kitano H."/>
            <person name="Kollias G."/>
            <person name="Krishnan S.P."/>
            <person name="Kruger A."/>
            <person name="Kummerfeld S.K."/>
            <person name="Kurochkin I.V."/>
            <person name="Lareau L.F."/>
            <person name="Lazarevic D."/>
            <person name="Lipovich L."/>
            <person name="Liu J."/>
            <person name="Liuni S."/>
            <person name="McWilliam S."/>
            <person name="Madan Babu M."/>
            <person name="Madera M."/>
            <person name="Marchionni L."/>
            <person name="Matsuda H."/>
            <person name="Matsuzawa S."/>
            <person name="Miki H."/>
            <person name="Mignone F."/>
            <person name="Miyake S."/>
            <person name="Morris K."/>
            <person name="Mottagui-Tabar S."/>
            <person name="Mulder N."/>
            <person name="Nakano N."/>
            <person name="Nakauchi H."/>
            <person name="Ng P."/>
            <person name="Nilsson R."/>
            <person name="Nishiguchi S."/>
            <person name="Nishikawa S."/>
            <person name="Nori F."/>
            <person name="Ohara O."/>
            <person name="Okazaki Y."/>
            <person name="Orlando V."/>
            <person name="Pang K.C."/>
            <person name="Pavan W.J."/>
            <person name="Pavesi G."/>
            <person name="Pesole G."/>
            <person name="Petrovsky N."/>
            <person name="Piazza S."/>
            <person name="Reed J."/>
            <person name="Reid J.F."/>
            <person name="Ring B.Z."/>
            <person name="Ringwald M."/>
            <person name="Rost B."/>
            <person name="Ruan Y."/>
            <person name="Salzberg S.L."/>
            <person name="Sandelin A."/>
            <person name="Schneider C."/>
            <person name="Schoenbach C."/>
            <person name="Sekiguchi K."/>
            <person name="Semple C.A."/>
            <person name="Seno S."/>
            <person name="Sessa L."/>
            <person name="Sheng Y."/>
            <person name="Shibata Y."/>
            <person name="Shimada H."/>
            <person name="Shimada K."/>
            <person name="Silva D."/>
            <person name="Sinclair B."/>
            <person name="Sperling S."/>
            <person name="Stupka E."/>
            <person name="Sugiura K."/>
            <person name="Sultana R."/>
            <person name="Takenaka Y."/>
            <person name="Taki K."/>
            <person name="Tammoja K."/>
            <person name="Tan S.L."/>
            <person name="Tang S."/>
            <person name="Taylor M.S."/>
            <person name="Tegner J."/>
            <person name="Teichmann S.A."/>
            <person name="Ueda H.R."/>
            <person name="van Nimwegen E."/>
            <person name="Verardo R."/>
            <person name="Wei C.L."/>
            <person name="Yagi K."/>
            <person name="Yamanishi H."/>
            <person name="Zabarovsky E."/>
            <person name="Zhu S."/>
            <person name="Zimmer A."/>
            <person name="Hide W."/>
            <person name="Bult C."/>
            <person name="Grimmond S.M."/>
            <person name="Teasdale R.D."/>
            <person name="Liu E.T."/>
            <person name="Brusic V."/>
            <person name="Quackenbush J."/>
            <person name="Wahlestedt C."/>
            <person name="Mattick J.S."/>
            <person name="Hume D.A."/>
            <person name="Kai C."/>
            <person name="Sasaki D."/>
            <person name="Tomaru Y."/>
            <person name="Fukuda S."/>
            <person name="Kanamori-Katayama M."/>
            <person name="Suzuki M."/>
            <person name="Aoki J."/>
            <person name="Arakawa T."/>
            <person name="Iida J."/>
            <person name="Imamura K."/>
            <person name="Itoh M."/>
            <person name="Kato T."/>
            <person name="Kawaji H."/>
            <person name="Kawagashira N."/>
            <person name="Kawashima T."/>
            <person name="Kojima M."/>
            <person name="Kondo S."/>
            <person name="Konno H."/>
            <person name="Nakano K."/>
            <person name="Ninomiya N."/>
            <person name="Nishio T."/>
            <person name="Okada M."/>
            <person name="Plessy C."/>
            <person name="Shibata K."/>
            <person name="Shiraki T."/>
            <person name="Suzuki S."/>
            <person name="Tagami M."/>
            <person name="Waki K."/>
            <person name="Watahiki A."/>
            <person name="Okamura-Oho Y."/>
            <person name="Suzuki H."/>
            <person name="Kawai J."/>
            <person name="Hayashizaki Y."/>
        </authorList>
    </citation>
    <scope>NUCLEOTIDE SEQUENCE [LARGE SCALE MRNA]</scope>
    <source>
        <strain>C57BL/6J</strain>
        <tissue>Bone</tissue>
        <tissue>Cerebellum</tissue>
        <tissue>Colon</tissue>
        <tissue>Embryo</tissue>
    </source>
</reference>
<reference key="2">
    <citation type="journal article" date="2004" name="Genome Res.">
        <title>The status, quality, and expansion of the NIH full-length cDNA project: the Mammalian Gene Collection (MGC).</title>
        <authorList>
            <consortium name="The MGC Project Team"/>
        </authorList>
    </citation>
    <scope>NUCLEOTIDE SEQUENCE [LARGE SCALE MRNA] OF 296-529</scope>
    <source>
        <strain>FVB/N</strain>
        <tissue>Colon</tissue>
    </source>
</reference>
<sequence length="529" mass="61908">MEHRVVGPGPYRATRLWNETVELFRARMPLRRHRCRFKSYEHCFTASEAVDWLHELLRNSQNFGPEVTRKQTVQLLGKFLKNHVIEDIKGKWGQEDFEDNRHLYRFPPSSPLKPYPKKPLYQRDVIKFPEWNDPPPGTSQENIPVRPIVMNSEMWFKRHSIAIGEVPACRLVHRRQLTEANVEEIWKSTTLSYLQKILGLDSLEEVLNTKLVSSKFIIHNVYSVSKQGVVILDDKSKELPHWVLSAMKCLANWPNCTDWKQPMYLGFEKDVFKTIADYYGHLKEPLLTFHLFDAFVSVLGLLPKEKTAIEAFQLCCLLLPPENRRKLQLLMRMMARICLNKEMPPLSDGFGTRTLMVQTFSRCILCSKDEVDLDELLAARLVTFLMDNYQEILKVPLALQTSIEERVAHLRRVQIKYPGADMDITLSAPSFCRQISPEEFEYQRAYGSQEPLAALLEEVIADDKLSSKEKKKKLKQFQKSYPEVYQERFPTPESEALLFPEKPKAKPQLFMWALRKPFQPFQRTRSFRM</sequence>
<dbReference type="EMBL" id="AK036550">
    <property type="protein sequence ID" value="BAC29473.1"/>
    <property type="molecule type" value="mRNA"/>
</dbReference>
<dbReference type="EMBL" id="AK043283">
    <property type="protein sequence ID" value="BAC31514.1"/>
    <property type="molecule type" value="mRNA"/>
</dbReference>
<dbReference type="EMBL" id="AK077676">
    <property type="protein sequence ID" value="BAC36949.1"/>
    <property type="molecule type" value="mRNA"/>
</dbReference>
<dbReference type="EMBL" id="AK083480">
    <property type="protein sequence ID" value="BAC38932.1"/>
    <property type="molecule type" value="mRNA"/>
</dbReference>
<dbReference type="EMBL" id="BC048246">
    <property type="protein sequence ID" value="AAH48246.1"/>
    <property type="molecule type" value="mRNA"/>
</dbReference>
<dbReference type="CCDS" id="CCDS26762.1"/>
<dbReference type="RefSeq" id="NP_848798.1">
    <property type="nucleotide sequence ID" value="NM_178683.5"/>
</dbReference>
<dbReference type="SMR" id="Q8BH88"/>
<dbReference type="FunCoup" id="Q8BH88">
    <property type="interactions" value="530"/>
</dbReference>
<dbReference type="STRING" id="10090.ENSMUSP00000059291"/>
<dbReference type="iPTMnet" id="Q8BH88"/>
<dbReference type="PhosphoSitePlus" id="Q8BH88"/>
<dbReference type="jPOST" id="Q8BH88"/>
<dbReference type="PaxDb" id="10090-ENSMUSP00000059291"/>
<dbReference type="ProteomicsDB" id="279625"/>
<dbReference type="Antibodypedia" id="23636">
    <property type="antibodies" value="169 antibodies from 23 providers"/>
</dbReference>
<dbReference type="DNASU" id="218581"/>
<dbReference type="Ensembl" id="ENSMUST00000051594.12">
    <property type="protein sequence ID" value="ENSMUSP00000059291.6"/>
    <property type="gene ID" value="ENSMUSG00000021697.13"/>
</dbReference>
<dbReference type="Ensembl" id="ENSMUST00000163307.8">
    <property type="protein sequence ID" value="ENSMUSP00000131707.2"/>
    <property type="gene ID" value="ENSMUSG00000021697.13"/>
</dbReference>
<dbReference type="GeneID" id="218581"/>
<dbReference type="KEGG" id="mmu:218581"/>
<dbReference type="UCSC" id="uc007rvc.1">
    <property type="organism name" value="mouse"/>
</dbReference>
<dbReference type="AGR" id="MGI:2145425"/>
<dbReference type="CTD" id="55789"/>
<dbReference type="MGI" id="MGI:2145425">
    <property type="gene designation" value="Depdc1b"/>
</dbReference>
<dbReference type="VEuPathDB" id="HostDB:ENSMUSG00000021697"/>
<dbReference type="eggNOG" id="ENOG502QR00">
    <property type="taxonomic scope" value="Eukaryota"/>
</dbReference>
<dbReference type="GeneTree" id="ENSGT00950000182976"/>
<dbReference type="InParanoid" id="Q8BH88"/>
<dbReference type="OMA" id="KPHLMFF"/>
<dbReference type="OrthoDB" id="524326at2759"/>
<dbReference type="PhylomeDB" id="Q8BH88"/>
<dbReference type="TreeFam" id="TF328365"/>
<dbReference type="Reactome" id="R-MMU-8980692">
    <property type="pathway name" value="RHOA GTPase cycle"/>
</dbReference>
<dbReference type="Reactome" id="R-MMU-9013026">
    <property type="pathway name" value="RHOB GTPase cycle"/>
</dbReference>
<dbReference type="Reactome" id="R-MMU-9013106">
    <property type="pathway name" value="RHOC GTPase cycle"/>
</dbReference>
<dbReference type="Reactome" id="R-MMU-9013148">
    <property type="pathway name" value="CDC42 GTPase cycle"/>
</dbReference>
<dbReference type="Reactome" id="R-MMU-9013149">
    <property type="pathway name" value="RAC1 GTPase cycle"/>
</dbReference>
<dbReference type="Reactome" id="R-MMU-9013404">
    <property type="pathway name" value="RAC2 GTPase cycle"/>
</dbReference>
<dbReference type="Reactome" id="R-MMU-9013405">
    <property type="pathway name" value="RHOD GTPase cycle"/>
</dbReference>
<dbReference type="Reactome" id="R-MMU-9013406">
    <property type="pathway name" value="RHOQ GTPase cycle"/>
</dbReference>
<dbReference type="Reactome" id="R-MMU-9013408">
    <property type="pathway name" value="RHOG GTPase cycle"/>
</dbReference>
<dbReference type="Reactome" id="R-MMU-9013409">
    <property type="pathway name" value="RHOJ GTPase cycle"/>
</dbReference>
<dbReference type="Reactome" id="R-MMU-9013420">
    <property type="pathway name" value="RHOU GTPase cycle"/>
</dbReference>
<dbReference type="Reactome" id="R-MMU-9013423">
    <property type="pathway name" value="RAC3 GTPase cycle"/>
</dbReference>
<dbReference type="Reactome" id="R-MMU-9013424">
    <property type="pathway name" value="RHOV GTPase cycle"/>
</dbReference>
<dbReference type="Reactome" id="R-MMU-9035034">
    <property type="pathway name" value="RHOF GTPase cycle"/>
</dbReference>
<dbReference type="Reactome" id="R-MMU-9696264">
    <property type="pathway name" value="RND3 GTPase cycle"/>
</dbReference>
<dbReference type="Reactome" id="R-MMU-9696270">
    <property type="pathway name" value="RND2 GTPase cycle"/>
</dbReference>
<dbReference type="Reactome" id="R-MMU-9696273">
    <property type="pathway name" value="RND1 GTPase cycle"/>
</dbReference>
<dbReference type="BioGRID-ORCS" id="218581">
    <property type="hits" value="3 hits in 79 CRISPR screens"/>
</dbReference>
<dbReference type="ChiTaRS" id="Depdc1b">
    <property type="organism name" value="mouse"/>
</dbReference>
<dbReference type="PRO" id="PR:Q8BH88"/>
<dbReference type="Proteomes" id="UP000000589">
    <property type="component" value="Chromosome 13"/>
</dbReference>
<dbReference type="RNAct" id="Q8BH88">
    <property type="molecule type" value="protein"/>
</dbReference>
<dbReference type="Bgee" id="ENSMUSG00000021697">
    <property type="expression patterns" value="Expressed in manus and 128 other cell types or tissues"/>
</dbReference>
<dbReference type="ExpressionAtlas" id="Q8BH88">
    <property type="expression patterns" value="baseline and differential"/>
</dbReference>
<dbReference type="GO" id="GO:0005096">
    <property type="term" value="F:GTPase activator activity"/>
    <property type="evidence" value="ECO:0007669"/>
    <property type="project" value="UniProtKB-KW"/>
</dbReference>
<dbReference type="GO" id="GO:0016477">
    <property type="term" value="P:cell migration"/>
    <property type="evidence" value="ECO:0007669"/>
    <property type="project" value="Ensembl"/>
</dbReference>
<dbReference type="GO" id="GO:0035556">
    <property type="term" value="P:intracellular signal transduction"/>
    <property type="evidence" value="ECO:0007669"/>
    <property type="project" value="InterPro"/>
</dbReference>
<dbReference type="GO" id="GO:0030177">
    <property type="term" value="P:positive regulation of Wnt signaling pathway"/>
    <property type="evidence" value="ECO:0007669"/>
    <property type="project" value="Ensembl"/>
</dbReference>
<dbReference type="CDD" id="cd04405">
    <property type="entry name" value="RhoGAP_BRCC3-like"/>
    <property type="match status" value="1"/>
</dbReference>
<dbReference type="FunFam" id="1.10.10.10:FF:000182">
    <property type="entry name" value="DEP domain-containing protein 1B isoform 1"/>
    <property type="match status" value="1"/>
</dbReference>
<dbReference type="FunFam" id="1.10.555.10:FF:000029">
    <property type="entry name" value="DEP domain-containing protein 1B isoform X2"/>
    <property type="match status" value="1"/>
</dbReference>
<dbReference type="Gene3D" id="1.10.555.10">
    <property type="entry name" value="Rho GTPase activation protein"/>
    <property type="match status" value="1"/>
</dbReference>
<dbReference type="Gene3D" id="1.10.10.10">
    <property type="entry name" value="Winged helix-like DNA-binding domain superfamily/Winged helix DNA-binding domain"/>
    <property type="match status" value="1"/>
</dbReference>
<dbReference type="InterPro" id="IPR000591">
    <property type="entry name" value="DEP_dom"/>
</dbReference>
<dbReference type="InterPro" id="IPR008936">
    <property type="entry name" value="Rho_GTPase_activation_prot"/>
</dbReference>
<dbReference type="InterPro" id="IPR000198">
    <property type="entry name" value="RhoGAP_dom"/>
</dbReference>
<dbReference type="InterPro" id="IPR036388">
    <property type="entry name" value="WH-like_DNA-bd_sf"/>
</dbReference>
<dbReference type="InterPro" id="IPR036390">
    <property type="entry name" value="WH_DNA-bd_sf"/>
</dbReference>
<dbReference type="PANTHER" id="PTHR16206">
    <property type="entry name" value="DEP DOMAIN-CONTAINING"/>
    <property type="match status" value="1"/>
</dbReference>
<dbReference type="PANTHER" id="PTHR16206:SF11">
    <property type="entry name" value="DEP DOMAIN-CONTAINING PROTEIN 1B"/>
    <property type="match status" value="1"/>
</dbReference>
<dbReference type="Pfam" id="PF00610">
    <property type="entry name" value="DEP"/>
    <property type="match status" value="1"/>
</dbReference>
<dbReference type="Pfam" id="PF00620">
    <property type="entry name" value="RhoGAP"/>
    <property type="match status" value="1"/>
</dbReference>
<dbReference type="SMART" id="SM00049">
    <property type="entry name" value="DEP"/>
    <property type="match status" value="1"/>
</dbReference>
<dbReference type="SUPFAM" id="SSF48350">
    <property type="entry name" value="GTPase activation domain, GAP"/>
    <property type="match status" value="1"/>
</dbReference>
<dbReference type="SUPFAM" id="SSF46785">
    <property type="entry name" value="Winged helix' DNA-binding domain"/>
    <property type="match status" value="1"/>
</dbReference>
<dbReference type="PROSITE" id="PS50186">
    <property type="entry name" value="DEP"/>
    <property type="match status" value="1"/>
</dbReference>
<dbReference type="PROSITE" id="PS50238">
    <property type="entry name" value="RHOGAP"/>
    <property type="match status" value="1"/>
</dbReference>
<keyword id="KW-0343">GTPase activation</keyword>
<keyword id="KW-0597">Phosphoprotein</keyword>
<keyword id="KW-1185">Reference proteome</keyword>
<organism>
    <name type="scientific">Mus musculus</name>
    <name type="common">Mouse</name>
    <dbReference type="NCBI Taxonomy" id="10090"/>
    <lineage>
        <taxon>Eukaryota</taxon>
        <taxon>Metazoa</taxon>
        <taxon>Chordata</taxon>
        <taxon>Craniata</taxon>
        <taxon>Vertebrata</taxon>
        <taxon>Euteleostomi</taxon>
        <taxon>Mammalia</taxon>
        <taxon>Eutheria</taxon>
        <taxon>Euarchontoglires</taxon>
        <taxon>Glires</taxon>
        <taxon>Rodentia</taxon>
        <taxon>Myomorpha</taxon>
        <taxon>Muroidea</taxon>
        <taxon>Muridae</taxon>
        <taxon>Murinae</taxon>
        <taxon>Mus</taxon>
        <taxon>Mus</taxon>
    </lineage>
</organism>
<name>DEP1B_MOUSE</name>
<evidence type="ECO:0000250" key="1">
    <source>
        <dbReference type="UniProtKB" id="Q8WUY9"/>
    </source>
</evidence>
<evidence type="ECO:0000255" key="2">
    <source>
        <dbReference type="PROSITE-ProRule" id="PRU00066"/>
    </source>
</evidence>
<evidence type="ECO:0000255" key="3">
    <source>
        <dbReference type="PROSITE-ProRule" id="PRU00172"/>
    </source>
</evidence>
<evidence type="ECO:0000305" key="4"/>
<protein>
    <recommendedName>
        <fullName>DEP domain-containing protein 1B</fullName>
    </recommendedName>
</protein>